<organism>
    <name type="scientific">Mus musculus</name>
    <name type="common">Mouse</name>
    <dbReference type="NCBI Taxonomy" id="10090"/>
    <lineage>
        <taxon>Eukaryota</taxon>
        <taxon>Metazoa</taxon>
        <taxon>Chordata</taxon>
        <taxon>Craniata</taxon>
        <taxon>Vertebrata</taxon>
        <taxon>Euteleostomi</taxon>
        <taxon>Mammalia</taxon>
        <taxon>Eutheria</taxon>
        <taxon>Euarchontoglires</taxon>
        <taxon>Glires</taxon>
        <taxon>Rodentia</taxon>
        <taxon>Myomorpha</taxon>
        <taxon>Muroidea</taxon>
        <taxon>Muridae</taxon>
        <taxon>Murinae</taxon>
        <taxon>Mus</taxon>
        <taxon>Mus</taxon>
    </lineage>
</organism>
<sequence>MHCHAELRLSSPGQLKAARRRYKTFMIDEILSKETCDYFEKLSLYSVCPSLVVRPKPLHSCTGSPSLRAYPLLSVITRQPTVISHLVPTGSGLTPVLTRHPVAAAEAAAAAAETPGGEALASSESETEQPTPRQKKPRRSRTIFTELQLMGLEKKFQKQKYLSTPDRLDLAQSLGLTQLQVKTWYQNRRMKWKKMVLKGGQEAPTKPKGRPKKNSIPTSEEIEAEEKMNSQAQSQELLESSERQEEPCDTQEPKACLVPLEVAEPIHQPQELSEASSEPPPLS</sequence>
<dbReference type="EMBL" id="CT030724">
    <property type="status" value="NOT_ANNOTATED_CDS"/>
    <property type="molecule type" value="Genomic_DNA"/>
</dbReference>
<dbReference type="EMBL" id="BC012684">
    <property type="protein sequence ID" value="AAH12684.1"/>
    <property type="status" value="ALT_INIT"/>
    <property type="molecule type" value="mRNA"/>
</dbReference>
<dbReference type="EMBL" id="AY188085">
    <property type="protein sequence ID" value="AAO25649.1"/>
    <property type="molecule type" value="Genomic_DNA"/>
</dbReference>
<dbReference type="EMBL" id="L77900">
    <property type="protein sequence ID" value="AAB53146.1"/>
    <property type="status" value="ALT_INIT"/>
    <property type="molecule type" value="mRNA"/>
</dbReference>
<dbReference type="CCDS" id="CCDS52750.1"/>
<dbReference type="PIR" id="JC6307">
    <property type="entry name" value="JC6307"/>
</dbReference>
<dbReference type="RefSeq" id="NP_038828.2">
    <property type="nucleotide sequence ID" value="NM_013800.2"/>
</dbReference>
<dbReference type="SMR" id="O08686"/>
<dbReference type="BioGRID" id="198303">
    <property type="interactions" value="7"/>
</dbReference>
<dbReference type="FunCoup" id="O08686">
    <property type="interactions" value="619"/>
</dbReference>
<dbReference type="IntAct" id="O08686">
    <property type="interactions" value="3"/>
</dbReference>
<dbReference type="STRING" id="10090.ENSMUSP00000112314"/>
<dbReference type="iPTMnet" id="O08686"/>
<dbReference type="PhosphoSitePlus" id="O08686"/>
<dbReference type="PaxDb" id="10090-ENSMUSP00000112314"/>
<dbReference type="ProteomicsDB" id="277163"/>
<dbReference type="Antibodypedia" id="19208">
    <property type="antibodies" value="85 antibodies from 18 providers"/>
</dbReference>
<dbReference type="DNASU" id="12023"/>
<dbReference type="Ensembl" id="ENSMUST00000116615.5">
    <property type="protein sequence ID" value="ENSMUSP00000112314.4"/>
    <property type="gene ID" value="ENSMUSG00000032033.12"/>
</dbReference>
<dbReference type="GeneID" id="12023"/>
<dbReference type="KEGG" id="mmu:12023"/>
<dbReference type="UCSC" id="uc009oru.1">
    <property type="organism name" value="mouse"/>
</dbReference>
<dbReference type="AGR" id="MGI:109617"/>
<dbReference type="CTD" id="8538"/>
<dbReference type="MGI" id="MGI:109617">
    <property type="gene designation" value="Barx2"/>
</dbReference>
<dbReference type="VEuPathDB" id="HostDB:ENSMUSG00000032033"/>
<dbReference type="eggNOG" id="KOG0488">
    <property type="taxonomic scope" value="Eukaryota"/>
</dbReference>
<dbReference type="GeneTree" id="ENSGT00940000159663"/>
<dbReference type="HOGENOM" id="CLU_090214_0_0_1"/>
<dbReference type="InParanoid" id="O08686"/>
<dbReference type="OMA" id="AQEPKAH"/>
<dbReference type="OrthoDB" id="6159439at2759"/>
<dbReference type="PhylomeDB" id="O08686"/>
<dbReference type="TreeFam" id="TF350735"/>
<dbReference type="BioGRID-ORCS" id="12023">
    <property type="hits" value="2 hits in 79 CRISPR screens"/>
</dbReference>
<dbReference type="ChiTaRS" id="Barx2">
    <property type="organism name" value="mouse"/>
</dbReference>
<dbReference type="PRO" id="PR:O08686"/>
<dbReference type="Proteomes" id="UP000000589">
    <property type="component" value="Chromosome 9"/>
</dbReference>
<dbReference type="RNAct" id="O08686">
    <property type="molecule type" value="protein"/>
</dbReference>
<dbReference type="Bgee" id="ENSMUSG00000032033">
    <property type="expression patterns" value="Expressed in lip and 109 other cell types or tissues"/>
</dbReference>
<dbReference type="GO" id="GO:0015629">
    <property type="term" value="C:actin cytoskeleton"/>
    <property type="evidence" value="ECO:0007669"/>
    <property type="project" value="Ensembl"/>
</dbReference>
<dbReference type="GO" id="GO:0005829">
    <property type="term" value="C:cytosol"/>
    <property type="evidence" value="ECO:0007669"/>
    <property type="project" value="Ensembl"/>
</dbReference>
<dbReference type="GO" id="GO:0005794">
    <property type="term" value="C:Golgi apparatus"/>
    <property type="evidence" value="ECO:0007669"/>
    <property type="project" value="Ensembl"/>
</dbReference>
<dbReference type="GO" id="GO:0005654">
    <property type="term" value="C:nucleoplasm"/>
    <property type="evidence" value="ECO:0007669"/>
    <property type="project" value="Ensembl"/>
</dbReference>
<dbReference type="GO" id="GO:0005667">
    <property type="term" value="C:transcription regulator complex"/>
    <property type="evidence" value="ECO:0000314"/>
    <property type="project" value="MGI"/>
</dbReference>
<dbReference type="GO" id="GO:0003682">
    <property type="term" value="F:chromatin binding"/>
    <property type="evidence" value="ECO:0000314"/>
    <property type="project" value="MGI"/>
</dbReference>
<dbReference type="GO" id="GO:0003677">
    <property type="term" value="F:DNA binding"/>
    <property type="evidence" value="ECO:0000314"/>
    <property type="project" value="MGI"/>
</dbReference>
<dbReference type="GO" id="GO:0001228">
    <property type="term" value="F:DNA-binding transcription activator activity, RNA polymerase II-specific"/>
    <property type="evidence" value="ECO:0007669"/>
    <property type="project" value="Ensembl"/>
</dbReference>
<dbReference type="GO" id="GO:0003700">
    <property type="term" value="F:DNA-binding transcription factor activity"/>
    <property type="evidence" value="ECO:0000314"/>
    <property type="project" value="MGI"/>
</dbReference>
<dbReference type="GO" id="GO:0000977">
    <property type="term" value="F:RNA polymerase II transcription regulatory region sequence-specific DNA binding"/>
    <property type="evidence" value="ECO:0007669"/>
    <property type="project" value="Ensembl"/>
</dbReference>
<dbReference type="GO" id="GO:0043565">
    <property type="term" value="F:sequence-specific DNA binding"/>
    <property type="evidence" value="ECO:0000314"/>
    <property type="project" value="MGI"/>
</dbReference>
<dbReference type="GO" id="GO:0001502">
    <property type="term" value="P:cartilage condensation"/>
    <property type="evidence" value="ECO:0000314"/>
    <property type="project" value="MGI"/>
</dbReference>
<dbReference type="GO" id="GO:0014902">
    <property type="term" value="P:myotube differentiation"/>
    <property type="evidence" value="ECO:0000315"/>
    <property type="project" value="MGI"/>
</dbReference>
<dbReference type="GO" id="GO:0000122">
    <property type="term" value="P:negative regulation of transcription by RNA polymerase II"/>
    <property type="evidence" value="ECO:0000314"/>
    <property type="project" value="MGI"/>
</dbReference>
<dbReference type="GO" id="GO:0045944">
    <property type="term" value="P:positive regulation of transcription by RNA polymerase II"/>
    <property type="evidence" value="ECO:0000314"/>
    <property type="project" value="MGI"/>
</dbReference>
<dbReference type="GO" id="GO:0035914">
    <property type="term" value="P:skeletal muscle cell differentiation"/>
    <property type="evidence" value="ECO:0000315"/>
    <property type="project" value="MGI"/>
</dbReference>
<dbReference type="GO" id="GO:0006366">
    <property type="term" value="P:transcription by RNA polymerase II"/>
    <property type="evidence" value="ECO:0000314"/>
    <property type="project" value="MGI"/>
</dbReference>
<dbReference type="CDD" id="cd00086">
    <property type="entry name" value="homeodomain"/>
    <property type="match status" value="1"/>
</dbReference>
<dbReference type="FunFam" id="1.10.10.60:FF:000103">
    <property type="entry name" value="Homeobox protein BarH-like 2"/>
    <property type="match status" value="1"/>
</dbReference>
<dbReference type="Gene3D" id="1.10.10.60">
    <property type="entry name" value="Homeodomain-like"/>
    <property type="match status" value="1"/>
</dbReference>
<dbReference type="InterPro" id="IPR001356">
    <property type="entry name" value="HD"/>
</dbReference>
<dbReference type="InterPro" id="IPR020479">
    <property type="entry name" value="HD_metazoa"/>
</dbReference>
<dbReference type="InterPro" id="IPR017970">
    <property type="entry name" value="Homeobox_CS"/>
</dbReference>
<dbReference type="InterPro" id="IPR050848">
    <property type="entry name" value="Homeobox_TF"/>
</dbReference>
<dbReference type="InterPro" id="IPR009057">
    <property type="entry name" value="Homeodomain-like_sf"/>
</dbReference>
<dbReference type="InterPro" id="IPR000047">
    <property type="entry name" value="HTH_motif"/>
</dbReference>
<dbReference type="PANTHER" id="PTHR24333:SF15">
    <property type="entry name" value="BARX HOMEOBOX 2"/>
    <property type="match status" value="1"/>
</dbReference>
<dbReference type="PANTHER" id="PTHR24333">
    <property type="entry name" value="HOMEO BOX HB9 LIKE A-RELATED"/>
    <property type="match status" value="1"/>
</dbReference>
<dbReference type="Pfam" id="PF00046">
    <property type="entry name" value="Homeodomain"/>
    <property type="match status" value="1"/>
</dbReference>
<dbReference type="PRINTS" id="PR00024">
    <property type="entry name" value="HOMEOBOX"/>
</dbReference>
<dbReference type="PRINTS" id="PR00031">
    <property type="entry name" value="HTHREPRESSR"/>
</dbReference>
<dbReference type="SMART" id="SM00389">
    <property type="entry name" value="HOX"/>
    <property type="match status" value="1"/>
</dbReference>
<dbReference type="SUPFAM" id="SSF46689">
    <property type="entry name" value="Homeodomain-like"/>
    <property type="match status" value="1"/>
</dbReference>
<dbReference type="PROSITE" id="PS00027">
    <property type="entry name" value="HOMEOBOX_1"/>
    <property type="match status" value="1"/>
</dbReference>
<dbReference type="PROSITE" id="PS50071">
    <property type="entry name" value="HOMEOBOX_2"/>
    <property type="match status" value="1"/>
</dbReference>
<gene>
    <name type="primary">Barx2</name>
</gene>
<name>BARX2_MOUSE</name>
<keyword id="KW-0238">DNA-binding</keyword>
<keyword id="KW-0371">Homeobox</keyword>
<keyword id="KW-0539">Nucleus</keyword>
<keyword id="KW-1185">Reference proteome</keyword>
<keyword id="KW-0804">Transcription</keyword>
<keyword id="KW-0805">Transcription regulation</keyword>
<protein>
    <recommendedName>
        <fullName>Homeobox protein BarH-like 2</fullName>
    </recommendedName>
</protein>
<evidence type="ECO:0000255" key="1">
    <source>
        <dbReference type="PROSITE-ProRule" id="PRU00108"/>
    </source>
</evidence>
<evidence type="ECO:0000256" key="2">
    <source>
        <dbReference type="SAM" id="MobiDB-lite"/>
    </source>
</evidence>
<evidence type="ECO:0000305" key="3"/>
<reference key="1">
    <citation type="journal article" date="2009" name="PLoS Biol.">
        <title>Lineage-specific biology revealed by a finished genome assembly of the mouse.</title>
        <authorList>
            <person name="Church D.M."/>
            <person name="Goodstadt L."/>
            <person name="Hillier L.W."/>
            <person name="Zody M.C."/>
            <person name="Goldstein S."/>
            <person name="She X."/>
            <person name="Bult C.J."/>
            <person name="Agarwala R."/>
            <person name="Cherry J.L."/>
            <person name="DiCuccio M."/>
            <person name="Hlavina W."/>
            <person name="Kapustin Y."/>
            <person name="Meric P."/>
            <person name="Maglott D."/>
            <person name="Birtle Z."/>
            <person name="Marques A.C."/>
            <person name="Graves T."/>
            <person name="Zhou S."/>
            <person name="Teague B."/>
            <person name="Potamousis K."/>
            <person name="Churas C."/>
            <person name="Place M."/>
            <person name="Herschleb J."/>
            <person name="Runnheim R."/>
            <person name="Forrest D."/>
            <person name="Amos-Landgraf J."/>
            <person name="Schwartz D.C."/>
            <person name="Cheng Z."/>
            <person name="Lindblad-Toh K."/>
            <person name="Eichler E.E."/>
            <person name="Ponting C.P."/>
        </authorList>
    </citation>
    <scope>NUCLEOTIDE SEQUENCE [LARGE SCALE GENOMIC DNA]</scope>
    <source>
        <strain>C57BL/6J</strain>
    </source>
</reference>
<reference key="2">
    <citation type="journal article" date="2004" name="Genome Res.">
        <title>The status, quality, and expansion of the NIH full-length cDNA project: the Mammalian Gene Collection (MGC).</title>
        <authorList>
            <consortium name="The MGC Project Team"/>
        </authorList>
    </citation>
    <scope>NUCLEOTIDE SEQUENCE [LARGE SCALE MRNA]</scope>
    <source>
        <strain>FVB/N</strain>
        <tissue>Mammary tumor</tissue>
    </source>
</reference>
<reference key="3">
    <citation type="journal article" date="2003" name="J. Biol. Chem.">
        <title>The homeodomain protein Barx2 promotes myogenic differentiation and is regulated by myogenic regulatory factors.</title>
        <authorList>
            <person name="Meech R."/>
            <person name="Makarenkova H."/>
            <person name="Edelman D.B."/>
            <person name="Jones F.S."/>
        </authorList>
    </citation>
    <scope>NUCLEOTIDE SEQUENCE [GENOMIC DNA] OF 1-62</scope>
    <source>
        <strain>129/SvJ</strain>
    </source>
</reference>
<reference key="4">
    <citation type="journal article" date="1997" name="Proc. Natl. Acad. Sci. U.S.A.">
        <title>Barx2, a new homeobox gene of the Bar class, is expressed in neural and craniofacial structures during development.</title>
        <authorList>
            <person name="Jones F.S."/>
            <person name="Kioussi C."/>
            <person name="Copertino D.W."/>
            <person name="Kallunki P."/>
            <person name="Holst B.D."/>
            <person name="Edelman G.M."/>
        </authorList>
    </citation>
    <scope>NUCLEOTIDE SEQUENCE [MRNA] OF 7-283</scope>
    <source>
        <strain>BALB/cJ</strain>
        <tissue>Embryo</tissue>
    </source>
</reference>
<proteinExistence type="evidence at transcript level"/>
<feature type="chain" id="PRO_0000048839" description="Homeobox protein BarH-like 2">
    <location>
        <begin position="1"/>
        <end position="283"/>
    </location>
</feature>
<feature type="DNA-binding region" description="Homeobox" evidence="1">
    <location>
        <begin position="139"/>
        <end position="198"/>
    </location>
</feature>
<feature type="region of interest" description="Disordered" evidence="2">
    <location>
        <begin position="107"/>
        <end position="141"/>
    </location>
</feature>
<feature type="region of interest" description="Disordered" evidence="2">
    <location>
        <begin position="198"/>
        <end position="283"/>
    </location>
</feature>
<feature type="compositionally biased region" description="Polar residues" evidence="2">
    <location>
        <begin position="122"/>
        <end position="132"/>
    </location>
</feature>
<feature type="compositionally biased region" description="Low complexity" evidence="2">
    <location>
        <begin position="268"/>
        <end position="277"/>
    </location>
</feature>
<feature type="sequence conflict" description="In Ref. 4; AAB53146." evidence="3" ref="4">
    <original>L</original>
    <variation>P</variation>
    <location>
        <position position="73"/>
    </location>
</feature>
<feature type="sequence conflict" description="In Ref. 2; AAH12684." evidence="3" ref="2">
    <original>A</original>
    <variation>S</variation>
    <location>
        <position position="105"/>
    </location>
</feature>
<feature type="sequence conflict" description="In Ref. 2; AAH12684." evidence="3" ref="2">
    <original>E</original>
    <variation>EA</variation>
    <location>
        <position position="106"/>
    </location>
</feature>
<feature type="sequence conflict" description="In Ref. 4; AAB53146." evidence="3" ref="4">
    <location>
        <begin position="244"/>
        <end position="273"/>
    </location>
</feature>
<accession>O08686</accession>
<accession>Q80ZF9</accession>
<accession>Q921G1</accession>
<comment type="function">
    <text>Transcription factor. Binds optimally to the DNA consensus sequence 5'-YYTAATGRTTTTY-3'. May control the expression of neural adhesion molecules such as L1 or Ng-CAM during embryonic development of both the central and peripherical nervous system. May be involved in controlling adhesive processes in keratinizing epithelia.</text>
</comment>
<comment type="subcellular location">
    <subcellularLocation>
        <location>Nucleus</location>
    </subcellularLocation>
</comment>
<comment type="tissue specificity">
    <text>Nervous system, particularly in the telencephalon, spinal cord, and dorsal root ganglia.</text>
</comment>
<comment type="developmental stage">
    <text>Highly expressed in small groups of cells undergoing tissue remodeling, such as ectodermal cells within indentations surrounding the eye and maxillo-nasal groove and in the first branchial pouch, lung buds, precartilagenous condensations, and mesenchyme of the limb. At 9.5 dpc, expressed only to head, prominent in the region of telencephalon and mesencephalon, and concentrated in cells along the dorsal midline. At 10.5 dpc, expression is moderated in the most rostral regions of the head, but particularly prominent in a lateral band of cells in the periocular region. At 11.5 dpc, detected in the telencephalon, frontonasal region and limbs. At 12.5 dpc, expressed in the telencephalon and hindbrain.</text>
</comment>
<comment type="similarity">
    <text evidence="3">Belongs to the BAR homeobox family.</text>
</comment>
<comment type="sequence caution" evidence="3">
    <conflict type="erroneous initiation">
        <sequence resource="EMBL-CDS" id="AAB53146"/>
    </conflict>
</comment>
<comment type="sequence caution" evidence="3">
    <conflict type="erroneous initiation">
        <sequence resource="EMBL-CDS" id="AAH12684"/>
    </conflict>
</comment>